<organism>
    <name type="scientific">Bifidobacterium adolescentis (strain ATCC 15703 / DSM 20083 / NCTC 11814 / E194a)</name>
    <dbReference type="NCBI Taxonomy" id="367928"/>
    <lineage>
        <taxon>Bacteria</taxon>
        <taxon>Bacillati</taxon>
        <taxon>Actinomycetota</taxon>
        <taxon>Actinomycetes</taxon>
        <taxon>Bifidobacteriales</taxon>
        <taxon>Bifidobacteriaceae</taxon>
        <taxon>Bifidobacterium</taxon>
    </lineage>
</organism>
<keyword id="KW-0046">Antibiotic resistance</keyword>
<keyword id="KW-1003">Cell membrane</keyword>
<keyword id="KW-0133">Cell shape</keyword>
<keyword id="KW-0961">Cell wall biogenesis/degradation</keyword>
<keyword id="KW-0378">Hydrolase</keyword>
<keyword id="KW-0472">Membrane</keyword>
<keyword id="KW-0573">Peptidoglycan synthesis</keyword>
<keyword id="KW-1185">Reference proteome</keyword>
<keyword id="KW-0812">Transmembrane</keyword>
<keyword id="KW-1133">Transmembrane helix</keyword>
<proteinExistence type="inferred from homology"/>
<accession>A1A1M3</accession>
<sequence>MNFFQAIFLGLVQALTEYLPVSSSAHIRIIGDLMLGSDPGAAFTAIIQIGTELAVILYFRHDIIRILGAWFGSLFGKEGKDFKSRMGAHNRDTQMGWFIIIGTLPILIAGLLFKDAIESTLRNLWITVTVLIIFGILLWVVDARAKQVKTMDEMTWKDALIFGIGQMLALIPGVSRSGGTITFGRAMGYTREAAVRVSFLMAIPAVFGAGILEAVSAVKDVAAGNAGMFPGWGATIAATIVAFVVGYVVIIGFLKFVSTFSYKAFAIYRIALAVVVALLLICGVLHPTEVVAAA</sequence>
<reference key="1">
    <citation type="submission" date="2006-12" db="EMBL/GenBank/DDBJ databases">
        <title>Bifidobacterium adolescentis complete genome sequence.</title>
        <authorList>
            <person name="Suzuki T."/>
            <person name="Tsuda Y."/>
            <person name="Kanou N."/>
            <person name="Inoue T."/>
            <person name="Kumazaki K."/>
            <person name="Nagano S."/>
            <person name="Hirai S."/>
            <person name="Tanaka K."/>
            <person name="Watanabe K."/>
        </authorList>
    </citation>
    <scope>NUCLEOTIDE SEQUENCE [LARGE SCALE GENOMIC DNA]</scope>
    <source>
        <strain>ATCC 15703 / DSM 20083 / NCTC 11814 / E194a</strain>
    </source>
</reference>
<dbReference type="EC" id="3.6.1.27" evidence="1"/>
<dbReference type="EMBL" id="AP009256">
    <property type="protein sequence ID" value="BAF39606.1"/>
    <property type="molecule type" value="Genomic_DNA"/>
</dbReference>
<dbReference type="RefSeq" id="WP_003809231.1">
    <property type="nucleotide sequence ID" value="NZ_CAXVNC010000004.1"/>
</dbReference>
<dbReference type="SMR" id="A1A1M3"/>
<dbReference type="STRING" id="367928.BAD_0825"/>
<dbReference type="PaxDb" id="1680-BADO_0878"/>
<dbReference type="GeneID" id="4557546"/>
<dbReference type="KEGG" id="bad:BAD_0825"/>
<dbReference type="HOGENOM" id="CLU_060296_1_0_11"/>
<dbReference type="Proteomes" id="UP000008702">
    <property type="component" value="Chromosome"/>
</dbReference>
<dbReference type="GO" id="GO:0005886">
    <property type="term" value="C:plasma membrane"/>
    <property type="evidence" value="ECO:0007669"/>
    <property type="project" value="UniProtKB-SubCell"/>
</dbReference>
<dbReference type="GO" id="GO:0050380">
    <property type="term" value="F:undecaprenyl-diphosphatase activity"/>
    <property type="evidence" value="ECO:0007669"/>
    <property type="project" value="UniProtKB-UniRule"/>
</dbReference>
<dbReference type="GO" id="GO:0071555">
    <property type="term" value="P:cell wall organization"/>
    <property type="evidence" value="ECO:0007669"/>
    <property type="project" value="UniProtKB-KW"/>
</dbReference>
<dbReference type="GO" id="GO:0009252">
    <property type="term" value="P:peptidoglycan biosynthetic process"/>
    <property type="evidence" value="ECO:0007669"/>
    <property type="project" value="UniProtKB-KW"/>
</dbReference>
<dbReference type="GO" id="GO:0008360">
    <property type="term" value="P:regulation of cell shape"/>
    <property type="evidence" value="ECO:0007669"/>
    <property type="project" value="UniProtKB-KW"/>
</dbReference>
<dbReference type="GO" id="GO:0046677">
    <property type="term" value="P:response to antibiotic"/>
    <property type="evidence" value="ECO:0007669"/>
    <property type="project" value="UniProtKB-UniRule"/>
</dbReference>
<dbReference type="HAMAP" id="MF_01006">
    <property type="entry name" value="Undec_diphosphatase"/>
    <property type="match status" value="1"/>
</dbReference>
<dbReference type="InterPro" id="IPR003824">
    <property type="entry name" value="UppP"/>
</dbReference>
<dbReference type="NCBIfam" id="NF001392">
    <property type="entry name" value="PRK00281.2-1"/>
    <property type="match status" value="1"/>
</dbReference>
<dbReference type="NCBIfam" id="TIGR00753">
    <property type="entry name" value="undec_PP_bacA"/>
    <property type="match status" value="1"/>
</dbReference>
<dbReference type="PANTHER" id="PTHR30622">
    <property type="entry name" value="UNDECAPRENYL-DIPHOSPHATASE"/>
    <property type="match status" value="1"/>
</dbReference>
<dbReference type="PANTHER" id="PTHR30622:SF4">
    <property type="entry name" value="UNDECAPRENYL-DIPHOSPHATASE"/>
    <property type="match status" value="1"/>
</dbReference>
<dbReference type="Pfam" id="PF02673">
    <property type="entry name" value="BacA"/>
    <property type="match status" value="1"/>
</dbReference>
<evidence type="ECO:0000255" key="1">
    <source>
        <dbReference type="HAMAP-Rule" id="MF_01006"/>
    </source>
</evidence>
<comment type="function">
    <text evidence="1">Catalyzes the dephosphorylation of undecaprenyl diphosphate (UPP). Confers resistance to bacitracin.</text>
</comment>
<comment type="catalytic activity">
    <reaction evidence="1">
        <text>di-trans,octa-cis-undecaprenyl diphosphate + H2O = di-trans,octa-cis-undecaprenyl phosphate + phosphate + H(+)</text>
        <dbReference type="Rhea" id="RHEA:28094"/>
        <dbReference type="ChEBI" id="CHEBI:15377"/>
        <dbReference type="ChEBI" id="CHEBI:15378"/>
        <dbReference type="ChEBI" id="CHEBI:43474"/>
        <dbReference type="ChEBI" id="CHEBI:58405"/>
        <dbReference type="ChEBI" id="CHEBI:60392"/>
        <dbReference type="EC" id="3.6.1.27"/>
    </reaction>
</comment>
<comment type="subcellular location">
    <subcellularLocation>
        <location evidence="1">Cell membrane</location>
        <topology evidence="1">Multi-pass membrane protein</topology>
    </subcellularLocation>
</comment>
<comment type="miscellaneous">
    <text>Bacitracin is thought to be involved in the inhibition of peptidoglycan synthesis by sequestering undecaprenyl diphosphate, thereby reducing the pool of lipid carrier available.</text>
</comment>
<comment type="similarity">
    <text evidence="1">Belongs to the UppP family.</text>
</comment>
<feature type="chain" id="PRO_0000290688" description="Undecaprenyl-diphosphatase">
    <location>
        <begin position="1"/>
        <end position="294"/>
    </location>
</feature>
<feature type="transmembrane region" description="Helical" evidence="1">
    <location>
        <begin position="39"/>
        <end position="59"/>
    </location>
</feature>
<feature type="transmembrane region" description="Helical" evidence="1">
    <location>
        <begin position="93"/>
        <end position="113"/>
    </location>
</feature>
<feature type="transmembrane region" description="Helical" evidence="1">
    <location>
        <begin position="123"/>
        <end position="143"/>
    </location>
</feature>
<feature type="transmembrane region" description="Helical" evidence="1">
    <location>
        <begin position="197"/>
        <end position="217"/>
    </location>
</feature>
<feature type="transmembrane region" description="Helical" evidence="1">
    <location>
        <begin position="234"/>
        <end position="254"/>
    </location>
</feature>
<feature type="transmembrane region" description="Helical" evidence="1">
    <location>
        <begin position="265"/>
        <end position="285"/>
    </location>
</feature>
<gene>
    <name evidence="1" type="primary">uppP</name>
    <name type="synonym">bacA</name>
    <name type="ordered locus">BAD_0825</name>
</gene>
<protein>
    <recommendedName>
        <fullName evidence="1">Undecaprenyl-diphosphatase</fullName>
        <ecNumber evidence="1">3.6.1.27</ecNumber>
    </recommendedName>
    <alternativeName>
        <fullName evidence="1">Bacitracin resistance protein</fullName>
    </alternativeName>
    <alternativeName>
        <fullName evidence="1">Undecaprenyl pyrophosphate phosphatase</fullName>
    </alternativeName>
</protein>
<name>UPPP_BIFAA</name>